<proteinExistence type="evidence at protein level"/>
<reference key="1">
    <citation type="submission" date="1997-02" db="EMBL/GenBank/DDBJ databases">
        <authorList>
            <person name="Orlandi I."/>
            <person name="Popolo L."/>
            <person name="Cavadini P."/>
            <person name="Vai M."/>
        </authorList>
    </citation>
    <scope>NUCLEOTIDE SEQUENCE [MRNA]</scope>
</reference>
<reference key="2">
    <citation type="journal article" date="2002" name="Nature">
        <title>The genome sequence of Schizosaccharomyces pombe.</title>
        <authorList>
            <person name="Wood V."/>
            <person name="Gwilliam R."/>
            <person name="Rajandream M.A."/>
            <person name="Lyne M.H."/>
            <person name="Lyne R."/>
            <person name="Stewart A."/>
            <person name="Sgouros J.G."/>
            <person name="Peat N."/>
            <person name="Hayles J."/>
            <person name="Baker S.G."/>
            <person name="Basham D."/>
            <person name="Bowman S."/>
            <person name="Brooks K."/>
            <person name="Brown D."/>
            <person name="Brown S."/>
            <person name="Chillingworth T."/>
            <person name="Churcher C.M."/>
            <person name="Collins M."/>
            <person name="Connor R."/>
            <person name="Cronin A."/>
            <person name="Davis P."/>
            <person name="Feltwell T."/>
            <person name="Fraser A."/>
            <person name="Gentles S."/>
            <person name="Goble A."/>
            <person name="Hamlin N."/>
            <person name="Harris D.E."/>
            <person name="Hidalgo J."/>
            <person name="Hodgson G."/>
            <person name="Holroyd S."/>
            <person name="Hornsby T."/>
            <person name="Howarth S."/>
            <person name="Huckle E.J."/>
            <person name="Hunt S."/>
            <person name="Jagels K."/>
            <person name="James K.D."/>
            <person name="Jones L."/>
            <person name="Jones M."/>
            <person name="Leather S."/>
            <person name="McDonald S."/>
            <person name="McLean J."/>
            <person name="Mooney P."/>
            <person name="Moule S."/>
            <person name="Mungall K.L."/>
            <person name="Murphy L.D."/>
            <person name="Niblett D."/>
            <person name="Odell C."/>
            <person name="Oliver K."/>
            <person name="O'Neil S."/>
            <person name="Pearson D."/>
            <person name="Quail M.A."/>
            <person name="Rabbinowitsch E."/>
            <person name="Rutherford K.M."/>
            <person name="Rutter S."/>
            <person name="Saunders D."/>
            <person name="Seeger K."/>
            <person name="Sharp S."/>
            <person name="Skelton J."/>
            <person name="Simmonds M.N."/>
            <person name="Squares R."/>
            <person name="Squares S."/>
            <person name="Stevens K."/>
            <person name="Taylor K."/>
            <person name="Taylor R.G."/>
            <person name="Tivey A."/>
            <person name="Walsh S.V."/>
            <person name="Warren T."/>
            <person name="Whitehead S."/>
            <person name="Woodward J.R."/>
            <person name="Volckaert G."/>
            <person name="Aert R."/>
            <person name="Robben J."/>
            <person name="Grymonprez B."/>
            <person name="Weltjens I."/>
            <person name="Vanstreels E."/>
            <person name="Rieger M."/>
            <person name="Schaefer M."/>
            <person name="Mueller-Auer S."/>
            <person name="Gabel C."/>
            <person name="Fuchs M."/>
            <person name="Duesterhoeft A."/>
            <person name="Fritzc C."/>
            <person name="Holzer E."/>
            <person name="Moestl D."/>
            <person name="Hilbert H."/>
            <person name="Borzym K."/>
            <person name="Langer I."/>
            <person name="Beck A."/>
            <person name="Lehrach H."/>
            <person name="Reinhardt R."/>
            <person name="Pohl T.M."/>
            <person name="Eger P."/>
            <person name="Zimmermann W."/>
            <person name="Wedler H."/>
            <person name="Wambutt R."/>
            <person name="Purnelle B."/>
            <person name="Goffeau A."/>
            <person name="Cadieu E."/>
            <person name="Dreano S."/>
            <person name="Gloux S."/>
            <person name="Lelaure V."/>
            <person name="Mottier S."/>
            <person name="Galibert F."/>
            <person name="Aves S.J."/>
            <person name="Xiang Z."/>
            <person name="Hunt C."/>
            <person name="Moore K."/>
            <person name="Hurst S.M."/>
            <person name="Lucas M."/>
            <person name="Rochet M."/>
            <person name="Gaillardin C."/>
            <person name="Tallada V.A."/>
            <person name="Garzon A."/>
            <person name="Thode G."/>
            <person name="Daga R.R."/>
            <person name="Cruzado L."/>
            <person name="Jimenez J."/>
            <person name="Sanchez M."/>
            <person name="del Rey F."/>
            <person name="Benito J."/>
            <person name="Dominguez A."/>
            <person name="Revuelta J.L."/>
            <person name="Moreno S."/>
            <person name="Armstrong J."/>
            <person name="Forsburg S.L."/>
            <person name="Cerutti L."/>
            <person name="Lowe T."/>
            <person name="McCombie W.R."/>
            <person name="Paulsen I."/>
            <person name="Potashkin J."/>
            <person name="Shpakovski G.V."/>
            <person name="Ussery D."/>
            <person name="Barrell B.G."/>
            <person name="Nurse P."/>
        </authorList>
    </citation>
    <scope>NUCLEOTIDE SEQUENCE [LARGE SCALE GENOMIC DNA]</scope>
    <source>
        <strain>972 / ATCC 24843</strain>
    </source>
</reference>
<reference key="3">
    <citation type="journal article" date="2008" name="J. Proteome Res.">
        <title>Phosphoproteome analysis of fission yeast.</title>
        <authorList>
            <person name="Wilson-Grady J.T."/>
            <person name="Villen J."/>
            <person name="Gygi S.P."/>
        </authorList>
    </citation>
    <scope>PHOSPHORYLATION [LARGE SCALE ANALYSIS] AT SER-59 AND SER-125</scope>
    <scope>IDENTIFICATION BY MASS SPECTROMETRY</scope>
</reference>
<accession>P78958</accession>
<name>G3P1_SCHPO</name>
<keyword id="KW-0963">Cytoplasm</keyword>
<keyword id="KW-0324">Glycolysis</keyword>
<keyword id="KW-0520">NAD</keyword>
<keyword id="KW-0560">Oxidoreductase</keyword>
<keyword id="KW-0597">Phosphoprotein</keyword>
<keyword id="KW-1185">Reference proteome</keyword>
<gene>
    <name type="primary">tdh1</name>
    <name type="synonym">gpd1</name>
    <name type="ORF">SPBC32F12.11</name>
</gene>
<feature type="chain" id="PRO_0000145580" description="Glyceraldehyde-3-phosphate dehydrogenase 1">
    <location>
        <begin position="1"/>
        <end position="336"/>
    </location>
</feature>
<feature type="active site" description="Nucleophile" evidence="2">
    <location>
        <position position="152"/>
    </location>
</feature>
<feature type="binding site" evidence="1">
    <location>
        <begin position="13"/>
        <end position="14"/>
    </location>
    <ligand>
        <name>NAD(+)</name>
        <dbReference type="ChEBI" id="CHEBI:57540"/>
    </ligand>
</feature>
<feature type="binding site" evidence="1">
    <location>
        <position position="35"/>
    </location>
    <ligand>
        <name>NAD(+)</name>
        <dbReference type="ChEBI" id="CHEBI:57540"/>
    </ligand>
</feature>
<feature type="binding site" evidence="1">
    <location>
        <position position="80"/>
    </location>
    <ligand>
        <name>NAD(+)</name>
        <dbReference type="ChEBI" id="CHEBI:57540"/>
    </ligand>
</feature>
<feature type="binding site" evidence="1">
    <location>
        <begin position="151"/>
        <end position="153"/>
    </location>
    <ligand>
        <name>D-glyceraldehyde 3-phosphate</name>
        <dbReference type="ChEBI" id="CHEBI:59776"/>
    </ligand>
</feature>
<feature type="binding site" evidence="1">
    <location>
        <position position="182"/>
    </location>
    <ligand>
        <name>D-glyceraldehyde 3-phosphate</name>
        <dbReference type="ChEBI" id="CHEBI:59776"/>
    </ligand>
</feature>
<feature type="binding site" evidence="1">
    <location>
        <begin position="211"/>
        <end position="212"/>
    </location>
    <ligand>
        <name>D-glyceraldehyde 3-phosphate</name>
        <dbReference type="ChEBI" id="CHEBI:59776"/>
    </ligand>
</feature>
<feature type="binding site" evidence="1">
    <location>
        <position position="234"/>
    </location>
    <ligand>
        <name>D-glyceraldehyde 3-phosphate</name>
        <dbReference type="ChEBI" id="CHEBI:59776"/>
    </ligand>
</feature>
<feature type="binding site" evidence="1">
    <location>
        <position position="316"/>
    </location>
    <ligand>
        <name>NAD(+)</name>
        <dbReference type="ChEBI" id="CHEBI:57540"/>
    </ligand>
</feature>
<feature type="site" description="Activates thiol group during catalysis" evidence="1">
    <location>
        <position position="179"/>
    </location>
</feature>
<feature type="modified residue" description="Phosphoserine" evidence="3">
    <location>
        <position position="59"/>
    </location>
</feature>
<feature type="modified residue" description="Phosphoserine" evidence="3">
    <location>
        <position position="125"/>
    </location>
</feature>
<sequence>MAIPKVGINGFGRIGRIVLRNALVAKTIQVVAINDPFIDLEYMAYMFKYDSTHGRFDGSVEIKDGKLVIDGNAIDVHNERDPADIKWSTSGADYVIESTGVFTTQETASAHLKGGAKRVIISAPSKDAPMYVVGVNEEKFNPSEKVISNASCTTNCLAPLAKVINDTFGIEEGLMTTVHATTATQKTVDGPSKKDWRGGRGASANIIPSSTGAAKAVGKVIPALNGKLTGMAFRVPTPDVSVVDLTVKLAKPTNYEDIKAAIKAASEGPMKGVLGYTEDAVVSTDFCGDNHSSIFDASAGIQLSPQFVKLVSWYDNEWGYSRRVVDLVAYTAAKDN</sequence>
<protein>
    <recommendedName>
        <fullName>Glyceraldehyde-3-phosphate dehydrogenase 1</fullName>
        <shortName>GAPDH 1</shortName>
        <ecNumber>1.2.1.12</ecNumber>
    </recommendedName>
</protein>
<evidence type="ECO:0000250" key="1"/>
<evidence type="ECO:0000255" key="2">
    <source>
        <dbReference type="PROSITE-ProRule" id="PRU10009"/>
    </source>
</evidence>
<evidence type="ECO:0000269" key="3">
    <source>
    </source>
</evidence>
<evidence type="ECO:0000305" key="4"/>
<dbReference type="EC" id="1.2.1.12"/>
<dbReference type="EMBL" id="X85332">
    <property type="protein sequence ID" value="CAA59681.1"/>
    <property type="molecule type" value="mRNA"/>
</dbReference>
<dbReference type="EMBL" id="CU329671">
    <property type="protein sequence ID" value="CAA19372.1"/>
    <property type="molecule type" value="Genomic_DNA"/>
</dbReference>
<dbReference type="PIR" id="T40235">
    <property type="entry name" value="T40235"/>
</dbReference>
<dbReference type="RefSeq" id="NP_596154.1">
    <property type="nucleotide sequence ID" value="NM_001022073.2"/>
</dbReference>
<dbReference type="SMR" id="P78958"/>
<dbReference type="BioGRID" id="277074">
    <property type="interactions" value="31"/>
</dbReference>
<dbReference type="FunCoup" id="P78958">
    <property type="interactions" value="358"/>
</dbReference>
<dbReference type="IntAct" id="P78958">
    <property type="interactions" value="5"/>
</dbReference>
<dbReference type="MINT" id="P78958"/>
<dbReference type="STRING" id="284812.P78958"/>
<dbReference type="iPTMnet" id="P78958"/>
<dbReference type="PaxDb" id="4896-SPBC32F12.11.1"/>
<dbReference type="EnsemblFungi" id="SPBC32F12.11.1">
    <property type="protein sequence ID" value="SPBC32F12.11.1:pep"/>
    <property type="gene ID" value="SPBC32F12.11"/>
</dbReference>
<dbReference type="GeneID" id="2540547"/>
<dbReference type="KEGG" id="spo:2540547"/>
<dbReference type="PomBase" id="SPBC32F12.11">
    <property type="gene designation" value="tdh1"/>
</dbReference>
<dbReference type="VEuPathDB" id="FungiDB:SPBC32F12.11"/>
<dbReference type="eggNOG" id="KOG0657">
    <property type="taxonomic scope" value="Eukaryota"/>
</dbReference>
<dbReference type="HOGENOM" id="CLU_030140_0_3_1"/>
<dbReference type="InParanoid" id="P78958"/>
<dbReference type="OMA" id="YGYTCNM"/>
<dbReference type="PhylomeDB" id="P78958"/>
<dbReference type="Reactome" id="R-SPO-70171">
    <property type="pathway name" value="Glycolysis"/>
</dbReference>
<dbReference type="Reactome" id="R-SPO-70263">
    <property type="pathway name" value="Gluconeogenesis"/>
</dbReference>
<dbReference type="UniPathway" id="UPA00109">
    <property type="reaction ID" value="UER00184"/>
</dbReference>
<dbReference type="PRO" id="PR:P78958"/>
<dbReference type="Proteomes" id="UP000002485">
    <property type="component" value="Chromosome II"/>
</dbReference>
<dbReference type="GO" id="GO:0005829">
    <property type="term" value="C:cytosol"/>
    <property type="evidence" value="ECO:0007005"/>
    <property type="project" value="PomBase"/>
</dbReference>
<dbReference type="GO" id="GO:0009277">
    <property type="term" value="C:fungal-type cell wall"/>
    <property type="evidence" value="ECO:0000266"/>
    <property type="project" value="PomBase"/>
</dbReference>
<dbReference type="GO" id="GO:1990315">
    <property type="term" value="C:Mcs4 RR-MAPKKK complex"/>
    <property type="evidence" value="ECO:0000353"/>
    <property type="project" value="PomBase"/>
</dbReference>
<dbReference type="GO" id="GO:0004365">
    <property type="term" value="F:glyceraldehyde-3-phosphate dehydrogenase (NAD+) (phosphorylating) activity"/>
    <property type="evidence" value="ECO:0000318"/>
    <property type="project" value="GO_Central"/>
</dbReference>
<dbReference type="GO" id="GO:0051287">
    <property type="term" value="F:NAD binding"/>
    <property type="evidence" value="ECO:0007669"/>
    <property type="project" value="InterPro"/>
</dbReference>
<dbReference type="GO" id="GO:0050661">
    <property type="term" value="F:NADP binding"/>
    <property type="evidence" value="ECO:0007669"/>
    <property type="project" value="InterPro"/>
</dbReference>
<dbReference type="GO" id="GO:0019826">
    <property type="term" value="F:oxygen sensor activity"/>
    <property type="evidence" value="ECO:0000315"/>
    <property type="project" value="PomBase"/>
</dbReference>
<dbReference type="GO" id="GO:0061621">
    <property type="term" value="P:canonical glycolysis"/>
    <property type="evidence" value="ECO:0000305"/>
    <property type="project" value="PomBase"/>
</dbReference>
<dbReference type="GO" id="GO:0034599">
    <property type="term" value="P:cellular response to oxidative stress"/>
    <property type="evidence" value="ECO:0000315"/>
    <property type="project" value="PomBase"/>
</dbReference>
<dbReference type="GO" id="GO:0006096">
    <property type="term" value="P:glycolytic process"/>
    <property type="evidence" value="ECO:0000318"/>
    <property type="project" value="GO_Central"/>
</dbReference>
<dbReference type="GO" id="GO:1900745">
    <property type="term" value="P:positive regulation of p38MAPK cascade"/>
    <property type="evidence" value="ECO:0000315"/>
    <property type="project" value="PomBase"/>
</dbReference>
<dbReference type="CDD" id="cd18126">
    <property type="entry name" value="GAPDH_I_C"/>
    <property type="match status" value="1"/>
</dbReference>
<dbReference type="CDD" id="cd05214">
    <property type="entry name" value="GAPDH_I_N"/>
    <property type="match status" value="1"/>
</dbReference>
<dbReference type="FunFam" id="3.30.360.10:FF:000001">
    <property type="entry name" value="Glyceraldehyde-3-phosphate dehydrogenase"/>
    <property type="match status" value="1"/>
</dbReference>
<dbReference type="FunFam" id="3.40.50.720:FF:000266">
    <property type="entry name" value="Glyceraldehyde-3-phosphate dehydrogenase"/>
    <property type="match status" value="1"/>
</dbReference>
<dbReference type="Gene3D" id="3.30.360.10">
    <property type="entry name" value="Dihydrodipicolinate Reductase, domain 2"/>
    <property type="match status" value="1"/>
</dbReference>
<dbReference type="Gene3D" id="3.40.50.720">
    <property type="entry name" value="NAD(P)-binding Rossmann-like Domain"/>
    <property type="match status" value="1"/>
</dbReference>
<dbReference type="InterPro" id="IPR020831">
    <property type="entry name" value="GlycerAld/Erythrose_P_DH"/>
</dbReference>
<dbReference type="InterPro" id="IPR020830">
    <property type="entry name" value="GlycerAld_3-P_DH_AS"/>
</dbReference>
<dbReference type="InterPro" id="IPR020829">
    <property type="entry name" value="GlycerAld_3-P_DH_cat"/>
</dbReference>
<dbReference type="InterPro" id="IPR020828">
    <property type="entry name" value="GlycerAld_3-P_DH_NAD(P)-bd"/>
</dbReference>
<dbReference type="InterPro" id="IPR006424">
    <property type="entry name" value="Glyceraldehyde-3-P_DH_1"/>
</dbReference>
<dbReference type="InterPro" id="IPR036291">
    <property type="entry name" value="NAD(P)-bd_dom_sf"/>
</dbReference>
<dbReference type="NCBIfam" id="TIGR01534">
    <property type="entry name" value="GAPDH-I"/>
    <property type="match status" value="1"/>
</dbReference>
<dbReference type="PANTHER" id="PTHR10836">
    <property type="entry name" value="GLYCERALDEHYDE 3-PHOSPHATE DEHYDROGENASE"/>
    <property type="match status" value="1"/>
</dbReference>
<dbReference type="PANTHER" id="PTHR10836:SF76">
    <property type="entry name" value="GLYCERALDEHYDE-3-PHOSPHATE DEHYDROGENASE-RELATED"/>
    <property type="match status" value="1"/>
</dbReference>
<dbReference type="Pfam" id="PF02800">
    <property type="entry name" value="Gp_dh_C"/>
    <property type="match status" value="1"/>
</dbReference>
<dbReference type="Pfam" id="PF00044">
    <property type="entry name" value="Gp_dh_N"/>
    <property type="match status" value="1"/>
</dbReference>
<dbReference type="PIRSF" id="PIRSF000149">
    <property type="entry name" value="GAP_DH"/>
    <property type="match status" value="1"/>
</dbReference>
<dbReference type="PRINTS" id="PR00078">
    <property type="entry name" value="G3PDHDRGNASE"/>
</dbReference>
<dbReference type="SMART" id="SM00846">
    <property type="entry name" value="Gp_dh_N"/>
    <property type="match status" value="1"/>
</dbReference>
<dbReference type="SUPFAM" id="SSF55347">
    <property type="entry name" value="Glyceraldehyde-3-phosphate dehydrogenase-like, C-terminal domain"/>
    <property type="match status" value="1"/>
</dbReference>
<dbReference type="SUPFAM" id="SSF51735">
    <property type="entry name" value="NAD(P)-binding Rossmann-fold domains"/>
    <property type="match status" value="1"/>
</dbReference>
<dbReference type="PROSITE" id="PS00071">
    <property type="entry name" value="GAPDH"/>
    <property type="match status" value="1"/>
</dbReference>
<organism>
    <name type="scientific">Schizosaccharomyces pombe (strain 972 / ATCC 24843)</name>
    <name type="common">Fission yeast</name>
    <dbReference type="NCBI Taxonomy" id="284812"/>
    <lineage>
        <taxon>Eukaryota</taxon>
        <taxon>Fungi</taxon>
        <taxon>Dikarya</taxon>
        <taxon>Ascomycota</taxon>
        <taxon>Taphrinomycotina</taxon>
        <taxon>Schizosaccharomycetes</taxon>
        <taxon>Schizosaccharomycetales</taxon>
        <taxon>Schizosaccharomycetaceae</taxon>
        <taxon>Schizosaccharomyces</taxon>
    </lineage>
</organism>
<comment type="catalytic activity">
    <reaction evidence="2">
        <text>D-glyceraldehyde 3-phosphate + phosphate + NAD(+) = (2R)-3-phospho-glyceroyl phosphate + NADH + H(+)</text>
        <dbReference type="Rhea" id="RHEA:10300"/>
        <dbReference type="ChEBI" id="CHEBI:15378"/>
        <dbReference type="ChEBI" id="CHEBI:43474"/>
        <dbReference type="ChEBI" id="CHEBI:57540"/>
        <dbReference type="ChEBI" id="CHEBI:57604"/>
        <dbReference type="ChEBI" id="CHEBI:57945"/>
        <dbReference type="ChEBI" id="CHEBI:59776"/>
        <dbReference type="EC" id="1.2.1.12"/>
    </reaction>
</comment>
<comment type="pathway">
    <text>Carbohydrate degradation; glycolysis; pyruvate from D-glyceraldehyde 3-phosphate: step 1/5.</text>
</comment>
<comment type="subunit">
    <text evidence="1">Homotetramer.</text>
</comment>
<comment type="subcellular location">
    <subcellularLocation>
        <location evidence="1">Cytoplasm</location>
    </subcellularLocation>
</comment>
<comment type="similarity">
    <text evidence="4">Belongs to the glyceraldehyde-3-phosphate dehydrogenase family.</text>
</comment>